<evidence type="ECO:0000250" key="1"/>
<evidence type="ECO:0000255" key="2"/>
<evidence type="ECO:0000305" key="3"/>
<accession>Q4P9R2</accession>
<accession>A0A0D1CPS6</accession>
<sequence>MTLLQLGVCAGSIYTTFLIWGLLQERLTKTPYTAPATLLHPNPQPDYFRSPLFLNTVQALFSSVVACMYLLVRNRGSNKRVTQILGLHTLTPDGIAEKTQNGRASATNGKAAPTRSRWISPLLSRYILIAALQSTASQLGFLSLRYISYPTLTLAKSCKLVPVLVMNVVLYRRKFASYKYAVVGLVTLGIWLFMAFAPSKPGKKAKAPESSSLIGLVLCLLNLVLDGATNSTQDQVFSMFGRQTVSAGQMMLVMNAISAFLMALTLTLPIPLLSTPGQPTQLSTAIAFTQKHPEVWRDIIAYALAGAVGQVSIFETLERFGSLTLVSITVTRKLFTMLLSVVVYKHELSKLQWLGVAVVFAGIGIEAREKRREGLANKVIHDEKRALAKDA</sequence>
<reference key="1">
    <citation type="journal article" date="2006" name="Nature">
        <title>Insights from the genome of the biotrophic fungal plant pathogen Ustilago maydis.</title>
        <authorList>
            <person name="Kaemper J."/>
            <person name="Kahmann R."/>
            <person name="Boelker M."/>
            <person name="Ma L.-J."/>
            <person name="Brefort T."/>
            <person name="Saville B.J."/>
            <person name="Banuett F."/>
            <person name="Kronstad J.W."/>
            <person name="Gold S.E."/>
            <person name="Mueller O."/>
            <person name="Perlin M.H."/>
            <person name="Woesten H.A.B."/>
            <person name="de Vries R."/>
            <person name="Ruiz-Herrera J."/>
            <person name="Reynaga-Pena C.G."/>
            <person name="Snetselaar K."/>
            <person name="McCann M."/>
            <person name="Perez-Martin J."/>
            <person name="Feldbruegge M."/>
            <person name="Basse C.W."/>
            <person name="Steinberg G."/>
            <person name="Ibeas J.I."/>
            <person name="Holloman W."/>
            <person name="Guzman P."/>
            <person name="Farman M.L."/>
            <person name="Stajich J.E."/>
            <person name="Sentandreu R."/>
            <person name="Gonzalez-Prieto J.M."/>
            <person name="Kennell J.C."/>
            <person name="Molina L."/>
            <person name="Schirawski J."/>
            <person name="Mendoza-Mendoza A."/>
            <person name="Greilinger D."/>
            <person name="Muench K."/>
            <person name="Roessel N."/>
            <person name="Scherer M."/>
            <person name="Vranes M."/>
            <person name="Ladendorf O."/>
            <person name="Vincon V."/>
            <person name="Fuchs U."/>
            <person name="Sandrock B."/>
            <person name="Meng S."/>
            <person name="Ho E.C.H."/>
            <person name="Cahill M.J."/>
            <person name="Boyce K.J."/>
            <person name="Klose J."/>
            <person name="Klosterman S.J."/>
            <person name="Deelstra H.J."/>
            <person name="Ortiz-Castellanos L."/>
            <person name="Li W."/>
            <person name="Sanchez-Alonso P."/>
            <person name="Schreier P.H."/>
            <person name="Haeuser-Hahn I."/>
            <person name="Vaupel M."/>
            <person name="Koopmann E."/>
            <person name="Friedrich G."/>
            <person name="Voss H."/>
            <person name="Schlueter T."/>
            <person name="Margolis J."/>
            <person name="Platt D."/>
            <person name="Swimmer C."/>
            <person name="Gnirke A."/>
            <person name="Chen F."/>
            <person name="Vysotskaia V."/>
            <person name="Mannhaupt G."/>
            <person name="Gueldener U."/>
            <person name="Muensterkoetter M."/>
            <person name="Haase D."/>
            <person name="Oesterheld M."/>
            <person name="Mewes H.-W."/>
            <person name="Mauceli E.W."/>
            <person name="DeCaprio D."/>
            <person name="Wade C.M."/>
            <person name="Butler J."/>
            <person name="Young S.K."/>
            <person name="Jaffe D.B."/>
            <person name="Calvo S.E."/>
            <person name="Nusbaum C."/>
            <person name="Galagan J.E."/>
            <person name="Birren B.W."/>
        </authorList>
    </citation>
    <scope>NUCLEOTIDE SEQUENCE [LARGE SCALE GENOMIC DNA]</scope>
    <source>
        <strain>DSM 14603 / FGSC 9021 / UM521</strain>
    </source>
</reference>
<reference key="2">
    <citation type="submission" date="2014-09" db="EMBL/GenBank/DDBJ databases">
        <authorList>
            <person name="Gueldener U."/>
            <person name="Muensterkoetter M."/>
            <person name="Walter M.C."/>
            <person name="Mannhaupt G."/>
            <person name="Kahmann R."/>
        </authorList>
    </citation>
    <scope>GENOME REANNOTATION</scope>
    <source>
        <strain>DSM 14603 / FGSC 9021 / UM521</strain>
    </source>
</reference>
<name>HUT1_MYCMD</name>
<keyword id="KW-0256">Endoplasmic reticulum</keyword>
<keyword id="KW-0325">Glycoprotein</keyword>
<keyword id="KW-0472">Membrane</keyword>
<keyword id="KW-1185">Reference proteome</keyword>
<keyword id="KW-0762">Sugar transport</keyword>
<keyword id="KW-0812">Transmembrane</keyword>
<keyword id="KW-1133">Transmembrane helix</keyword>
<keyword id="KW-0813">Transport</keyword>
<feature type="chain" id="PRO_0000213412" description="UDP-galactose transporter homolog 1">
    <location>
        <begin position="1"/>
        <end position="391"/>
    </location>
</feature>
<feature type="transmembrane region" description="Helical" evidence="2">
    <location>
        <begin position="3"/>
        <end position="23"/>
    </location>
</feature>
<feature type="transmembrane region" description="Helical" evidence="2">
    <location>
        <begin position="52"/>
        <end position="72"/>
    </location>
</feature>
<feature type="transmembrane region" description="Helical" evidence="2">
    <location>
        <begin position="126"/>
        <end position="147"/>
    </location>
</feature>
<feature type="transmembrane region" description="Helical" evidence="2">
    <location>
        <begin position="178"/>
        <end position="198"/>
    </location>
</feature>
<feature type="transmembrane region" description="Helical" evidence="2">
    <location>
        <begin position="207"/>
        <end position="227"/>
    </location>
</feature>
<feature type="transmembrane region" description="Helical" evidence="2">
    <location>
        <begin position="250"/>
        <end position="270"/>
    </location>
</feature>
<feature type="transmembrane region" description="Helical" evidence="2">
    <location>
        <begin position="298"/>
        <end position="318"/>
    </location>
</feature>
<feature type="transmembrane region" description="Helical" evidence="2">
    <location>
        <begin position="323"/>
        <end position="343"/>
    </location>
</feature>
<feature type="transmembrane region" description="Helical" evidence="2">
    <location>
        <begin position="347"/>
        <end position="367"/>
    </location>
</feature>
<feature type="glycosylation site" description="N-linked (GlcNAc...) asparagine" evidence="2">
    <location>
        <position position="230"/>
    </location>
</feature>
<dbReference type="EMBL" id="CM003147">
    <property type="protein sequence ID" value="KIS68578.1"/>
    <property type="molecule type" value="Genomic_DNA"/>
</dbReference>
<dbReference type="RefSeq" id="XP_011389847.1">
    <property type="nucleotide sequence ID" value="XM_011391545.1"/>
</dbReference>
<dbReference type="SMR" id="Q4P9R2"/>
<dbReference type="FunCoup" id="Q4P9R2">
    <property type="interactions" value="353"/>
</dbReference>
<dbReference type="STRING" id="237631.Q4P9R2"/>
<dbReference type="GlyCosmos" id="Q4P9R2">
    <property type="glycosylation" value="1 site, No reported glycans"/>
</dbReference>
<dbReference type="EnsemblFungi" id="KIS68578">
    <property type="protein sequence ID" value="KIS68578"/>
    <property type="gene ID" value="UMAG_12210"/>
</dbReference>
<dbReference type="GeneID" id="23567963"/>
<dbReference type="KEGG" id="uma:UMAG_12210"/>
<dbReference type="VEuPathDB" id="FungiDB:UMAG_12210"/>
<dbReference type="eggNOG" id="KOG1581">
    <property type="taxonomic scope" value="Eukaryota"/>
</dbReference>
<dbReference type="HOGENOM" id="CLU_036019_0_0_1"/>
<dbReference type="InParanoid" id="Q4P9R2"/>
<dbReference type="OrthoDB" id="1601at2759"/>
<dbReference type="Proteomes" id="UP000000561">
    <property type="component" value="Chromosome 8"/>
</dbReference>
<dbReference type="GO" id="GO:0005789">
    <property type="term" value="C:endoplasmic reticulum membrane"/>
    <property type="evidence" value="ECO:0000318"/>
    <property type="project" value="GO_Central"/>
</dbReference>
<dbReference type="GO" id="GO:0000139">
    <property type="term" value="C:Golgi membrane"/>
    <property type="evidence" value="ECO:0000318"/>
    <property type="project" value="GO_Central"/>
</dbReference>
<dbReference type="GO" id="GO:0005459">
    <property type="term" value="F:UDP-galactose transmembrane transporter activity"/>
    <property type="evidence" value="ECO:0000318"/>
    <property type="project" value="GO_Central"/>
</dbReference>
<dbReference type="GO" id="GO:0005460">
    <property type="term" value="F:UDP-glucose transmembrane transporter activity"/>
    <property type="evidence" value="ECO:0000318"/>
    <property type="project" value="GO_Central"/>
</dbReference>
<dbReference type="GO" id="GO:0072334">
    <property type="term" value="P:UDP-galactose transmembrane transport"/>
    <property type="evidence" value="ECO:0000318"/>
    <property type="project" value="GO_Central"/>
</dbReference>
<dbReference type="GO" id="GO:0120112">
    <property type="term" value="P:UDP-glucose transmembrane transport into endoplasmic reticulum"/>
    <property type="evidence" value="ECO:0007669"/>
    <property type="project" value="EnsemblFungi"/>
</dbReference>
<dbReference type="InterPro" id="IPR013657">
    <property type="entry name" value="SCL35B1-4/HUT1"/>
</dbReference>
<dbReference type="PANTHER" id="PTHR10778">
    <property type="entry name" value="SOLUTE CARRIER FAMILY 35 MEMBER B"/>
    <property type="match status" value="1"/>
</dbReference>
<dbReference type="PANTHER" id="PTHR10778:SF10">
    <property type="entry name" value="SOLUTE CARRIER FAMILY 35 MEMBER B1"/>
    <property type="match status" value="1"/>
</dbReference>
<dbReference type="Pfam" id="PF08449">
    <property type="entry name" value="UAA"/>
    <property type="match status" value="1"/>
</dbReference>
<dbReference type="SUPFAM" id="SSF103481">
    <property type="entry name" value="Multidrug resistance efflux transporter EmrE"/>
    <property type="match status" value="1"/>
</dbReference>
<organism>
    <name type="scientific">Mycosarcoma maydis</name>
    <name type="common">Corn smut fungus</name>
    <name type="synonym">Ustilago maydis</name>
    <dbReference type="NCBI Taxonomy" id="5270"/>
    <lineage>
        <taxon>Eukaryota</taxon>
        <taxon>Fungi</taxon>
        <taxon>Dikarya</taxon>
        <taxon>Basidiomycota</taxon>
        <taxon>Ustilaginomycotina</taxon>
        <taxon>Ustilaginomycetes</taxon>
        <taxon>Ustilaginales</taxon>
        <taxon>Ustilaginaceae</taxon>
        <taxon>Mycosarcoma</taxon>
    </lineage>
</organism>
<protein>
    <recommendedName>
        <fullName>UDP-galactose transporter homolog 1</fullName>
    </recommendedName>
</protein>
<gene>
    <name type="primary">HUT1</name>
    <name type="ORF">UMAG_12210</name>
</gene>
<proteinExistence type="inferred from homology"/>
<comment type="function">
    <text evidence="1">May be involved in specific transport of UDP-Gal from the cytosol to the Golgi lumen. Involved in the maintenance of optimal conditions for the folding of secretory pathway proteins in the endoplasmic reticulum (By similarity).</text>
</comment>
<comment type="subcellular location">
    <subcellularLocation>
        <location evidence="1">Endoplasmic reticulum membrane</location>
        <topology evidence="1">Multi-pass membrane protein</topology>
    </subcellularLocation>
</comment>
<comment type="similarity">
    <text evidence="3">Belongs to the nucleotide-sugar transporter family. SLC35B subfamily.</text>
</comment>